<organism>
    <name type="scientific">Bos taurus</name>
    <name type="common">Bovine</name>
    <dbReference type="NCBI Taxonomy" id="9913"/>
    <lineage>
        <taxon>Eukaryota</taxon>
        <taxon>Metazoa</taxon>
        <taxon>Chordata</taxon>
        <taxon>Craniata</taxon>
        <taxon>Vertebrata</taxon>
        <taxon>Euteleostomi</taxon>
        <taxon>Mammalia</taxon>
        <taxon>Eutheria</taxon>
        <taxon>Laurasiatheria</taxon>
        <taxon>Artiodactyla</taxon>
        <taxon>Ruminantia</taxon>
        <taxon>Pecora</taxon>
        <taxon>Bovidae</taxon>
        <taxon>Bovinae</taxon>
        <taxon>Bos</taxon>
    </lineage>
</organism>
<evidence type="ECO:0000250" key="1">
    <source>
        <dbReference type="UniProtKB" id="P15289"/>
    </source>
</evidence>
<evidence type="ECO:0000250" key="2">
    <source>
        <dbReference type="UniProtKB" id="Q6UWY0"/>
    </source>
</evidence>
<evidence type="ECO:0000255" key="3"/>
<evidence type="ECO:0000305" key="4"/>
<proteinExistence type="evidence at transcript level"/>
<sequence>MLLLWVSVVAASALAAPAPGADGQRRGAIQAWPDAPNVLLVVSDSFDGRLTFYPGSQVVKLPFINFMKAHGTSFLNAYTNSPICCPSRAAMWSGLFTHLTESWNNFKGLDPNYTTWMDVMEKHGYRTQKFGKLDYTSGHHSISNRVEAWTRDVAFLLRQEGRPMVNLAPKKTKVRVMQVDWKNTDRAVNWLRKEASNSTQPFVLYLGLNLPHPYPSPSSGENFGSSTFHTSRYWLKKVSYDAIKIPKWSPLSEMHPVDYYSSYTKNCTGKFTEKEIKNIRAFYYAMCAETDAMLGEIILALRQLGLLQKTIVIYTSDHGELAMEHRQFYKMSMYEASSHVPLLIMGPGIQANLQVSSVVSLVDIYPTMLDIAGIPLPQNLSGYSLLPSSSEMFKNEQKFKNLHPPWILSEFHGCNVNASTYMLRTNQWKYIAYSDGASVLPQLFDLSSDPDELTNIAAKFPEVTSSLDQKLRSIINYPKVSASVHQYNKEQFIKWKQSIGQNYSNVIANLRWHQDWLKKPKKYENAIDQWLKSHSDAKTI</sequence>
<feature type="signal peptide" evidence="3">
    <location>
        <begin position="1"/>
        <end position="22"/>
    </location>
</feature>
<feature type="chain" id="PRO_0000250471" description="Arylsulfatase K">
    <location>
        <begin position="23"/>
        <end position="540"/>
    </location>
</feature>
<feature type="active site" description="Nucleophile" evidence="1">
    <location>
        <position position="84"/>
    </location>
</feature>
<feature type="binding site" evidence="1">
    <location>
        <position position="44"/>
    </location>
    <ligand>
        <name>Ca(2+)</name>
        <dbReference type="ChEBI" id="CHEBI:29108"/>
    </ligand>
</feature>
<feature type="binding site" description="via 3-oxoalanine" evidence="1">
    <location>
        <position position="84"/>
    </location>
    <ligand>
        <name>Ca(2+)</name>
        <dbReference type="ChEBI" id="CHEBI:29108"/>
    </ligand>
</feature>
<feature type="binding site" evidence="1">
    <location>
        <position position="132"/>
    </location>
    <ligand>
        <name>substrate</name>
    </ligand>
</feature>
<feature type="binding site" evidence="1">
    <location>
        <position position="255"/>
    </location>
    <ligand>
        <name>substrate</name>
    </ligand>
</feature>
<feature type="binding site" evidence="1">
    <location>
        <position position="317"/>
    </location>
    <ligand>
        <name>Ca(2+)</name>
        <dbReference type="ChEBI" id="CHEBI:29108"/>
    </ligand>
</feature>
<feature type="binding site" evidence="1">
    <location>
        <position position="318"/>
    </location>
    <ligand>
        <name>Ca(2+)</name>
        <dbReference type="ChEBI" id="CHEBI:29108"/>
    </ligand>
</feature>
<feature type="modified residue" description="3-oxoalanine (Cys)" evidence="2">
    <location>
        <position position="84"/>
    </location>
</feature>
<feature type="glycosylation site" description="N-linked (GlcNAc...) asparagine" evidence="3">
    <location>
        <position position="112"/>
    </location>
</feature>
<feature type="glycosylation site" description="N-linked (GlcNAc...) asparagine" evidence="3">
    <location>
        <position position="197"/>
    </location>
</feature>
<feature type="glycosylation site" description="N-linked (GlcNAc...) asparagine" evidence="3">
    <location>
        <position position="266"/>
    </location>
</feature>
<feature type="glycosylation site" description="N-linked (GlcNAc...) asparagine" evidence="3">
    <location>
        <position position="379"/>
    </location>
</feature>
<feature type="glycosylation site" description="N-linked (GlcNAc...) asparagine" evidence="3">
    <location>
        <position position="417"/>
    </location>
</feature>
<feature type="glycosylation site" description="N-linked (GlcNAc...) asparagine" evidence="3">
    <location>
        <position position="502"/>
    </location>
</feature>
<name>ARSK_BOVIN</name>
<gene>
    <name type="primary">ARSK</name>
</gene>
<keyword id="KW-0106">Calcium</keyword>
<keyword id="KW-0325">Glycoprotein</keyword>
<keyword id="KW-0378">Hydrolase</keyword>
<keyword id="KW-0458">Lysosome</keyword>
<keyword id="KW-0479">Metal-binding</keyword>
<keyword id="KW-1185">Reference proteome</keyword>
<keyword id="KW-0964">Secreted</keyword>
<keyword id="KW-0732">Signal</keyword>
<accession>Q148F3</accession>
<dbReference type="EC" id="3.1.6.1" evidence="2"/>
<dbReference type="EC" id="3.1.6.18" evidence="2"/>
<dbReference type="EMBL" id="BC118383">
    <property type="protein sequence ID" value="AAI18384.1"/>
    <property type="molecule type" value="mRNA"/>
</dbReference>
<dbReference type="SMR" id="Q148F3"/>
<dbReference type="FunCoup" id="Q148F3">
    <property type="interactions" value="492"/>
</dbReference>
<dbReference type="STRING" id="9913.ENSBTAP00000026877"/>
<dbReference type="GlyCosmos" id="Q148F3">
    <property type="glycosylation" value="6 sites, No reported glycans"/>
</dbReference>
<dbReference type="GlyGen" id="Q148F3">
    <property type="glycosylation" value="6 sites"/>
</dbReference>
<dbReference type="PaxDb" id="9913-ENSBTAP00000026877"/>
<dbReference type="VEuPathDB" id="HostDB:ENSBTAG00000020178"/>
<dbReference type="eggNOG" id="KOG3731">
    <property type="taxonomic scope" value="Eukaryota"/>
</dbReference>
<dbReference type="eggNOG" id="KOG3867">
    <property type="taxonomic scope" value="Eukaryota"/>
</dbReference>
<dbReference type="HOGENOM" id="CLU_006332_6_0_1"/>
<dbReference type="InParanoid" id="Q148F3"/>
<dbReference type="OMA" id="RAYFGAC"/>
<dbReference type="OrthoDB" id="1886626at2759"/>
<dbReference type="TreeFam" id="TF313545"/>
<dbReference type="Reactome" id="R-BTA-1663150">
    <property type="pathway name" value="The activation of arylsulfatases"/>
</dbReference>
<dbReference type="Reactome" id="R-BTA-9840310">
    <property type="pathway name" value="Glycosphingolipid catabolism"/>
</dbReference>
<dbReference type="Proteomes" id="UP000009136">
    <property type="component" value="Chromosome 7"/>
</dbReference>
<dbReference type="Bgee" id="ENSBTAG00000020178">
    <property type="expression patterns" value="Expressed in caput epididymis and 101 other cell types or tissues"/>
</dbReference>
<dbReference type="GO" id="GO:0005576">
    <property type="term" value="C:extracellular region"/>
    <property type="evidence" value="ECO:0000250"/>
    <property type="project" value="UniProtKB"/>
</dbReference>
<dbReference type="GO" id="GO:0005764">
    <property type="term" value="C:lysosome"/>
    <property type="evidence" value="ECO:0000250"/>
    <property type="project" value="UniProtKB"/>
</dbReference>
<dbReference type="GO" id="GO:0004065">
    <property type="term" value="F:arylsulfatase activity"/>
    <property type="evidence" value="ECO:0000250"/>
    <property type="project" value="UniProtKB"/>
</dbReference>
<dbReference type="GO" id="GO:0015024">
    <property type="term" value="F:glucuronate-2-sulfatase activity"/>
    <property type="evidence" value="ECO:0000250"/>
    <property type="project" value="UniProtKB"/>
</dbReference>
<dbReference type="GO" id="GO:0046872">
    <property type="term" value="F:metal ion binding"/>
    <property type="evidence" value="ECO:0007669"/>
    <property type="project" value="UniProtKB-KW"/>
</dbReference>
<dbReference type="CDD" id="cd16171">
    <property type="entry name" value="ARSK"/>
    <property type="match status" value="1"/>
</dbReference>
<dbReference type="FunFam" id="3.40.720.10:FF:000039">
    <property type="entry name" value="arylsulfatase K"/>
    <property type="match status" value="1"/>
</dbReference>
<dbReference type="Gene3D" id="3.40.720.10">
    <property type="entry name" value="Alkaline Phosphatase, subunit A"/>
    <property type="match status" value="1"/>
</dbReference>
<dbReference type="InterPro" id="IPR017850">
    <property type="entry name" value="Alkaline_phosphatase_core_sf"/>
</dbReference>
<dbReference type="InterPro" id="IPR047892">
    <property type="entry name" value="ARSK"/>
</dbReference>
<dbReference type="InterPro" id="IPR051849">
    <property type="entry name" value="GAG-degrading_sulfatase"/>
</dbReference>
<dbReference type="InterPro" id="IPR000917">
    <property type="entry name" value="Sulfatase_N"/>
</dbReference>
<dbReference type="PANTHER" id="PTHR46615">
    <property type="entry name" value="ARYLSULFATASE K"/>
    <property type="match status" value="1"/>
</dbReference>
<dbReference type="PANTHER" id="PTHR46615:SF1">
    <property type="entry name" value="ARYLSULFATASE K"/>
    <property type="match status" value="1"/>
</dbReference>
<dbReference type="Pfam" id="PF00884">
    <property type="entry name" value="Sulfatase"/>
    <property type="match status" value="1"/>
</dbReference>
<dbReference type="SUPFAM" id="SSF53649">
    <property type="entry name" value="Alkaline phosphatase-like"/>
    <property type="match status" value="1"/>
</dbReference>
<reference key="1">
    <citation type="submission" date="2006-06" db="EMBL/GenBank/DDBJ databases">
        <authorList>
            <consortium name="NIH - Mammalian Gene Collection (MGC) project"/>
        </authorList>
    </citation>
    <scope>NUCLEOTIDE SEQUENCE [LARGE SCALE MRNA]</scope>
    <source>
        <strain>Hereford</strain>
        <tissue>Fetal cerebellum</tissue>
    </source>
</reference>
<protein>
    <recommendedName>
        <fullName>Arylsulfatase K</fullName>
        <shortName>ASK</shortName>
        <ecNumber evidence="2">3.1.6.1</ecNumber>
    </recommendedName>
    <alternativeName>
        <fullName>Glucuronate-2-sulfatase</fullName>
        <ecNumber evidence="2">3.1.6.18</ecNumber>
    </alternativeName>
</protein>
<comment type="function">
    <text evidence="2">Catalyzes the hydrolysis of pseudosubstrates such as p-nitrocatechol sulfate and p-nitrophenyl sulfate (By similarity). Catalyzes the hydrolysis of the 2-sulfate groups of the 2-O-sulfo-D-glucuronate residues of chondroitin sulfate, heparin and heparitin sulfate (By similarity). Acts selectively on 2-sulfoglucuronate and lacks activity against 2-sulfoiduronate (By similarity).</text>
</comment>
<comment type="catalytic activity">
    <reaction evidence="2">
        <text>an aryl sulfate + H2O = a phenol + sulfate + H(+)</text>
        <dbReference type="Rhea" id="RHEA:17261"/>
        <dbReference type="ChEBI" id="CHEBI:15377"/>
        <dbReference type="ChEBI" id="CHEBI:15378"/>
        <dbReference type="ChEBI" id="CHEBI:16189"/>
        <dbReference type="ChEBI" id="CHEBI:33853"/>
        <dbReference type="ChEBI" id="CHEBI:140317"/>
        <dbReference type="EC" id="3.1.6.1"/>
    </reaction>
</comment>
<comment type="catalytic activity">
    <reaction evidence="2">
        <text>Hydrolysis of the 2-sulfate groups of the 2-O-sulfo-D-glucuronate residues of chondroitin sulfate, heparin and heparitin sulfate.</text>
        <dbReference type="EC" id="3.1.6.18"/>
    </reaction>
</comment>
<comment type="cofactor">
    <cofactor evidence="1">
        <name>Ca(2+)</name>
        <dbReference type="ChEBI" id="CHEBI:29108"/>
    </cofactor>
    <text evidence="1">Binds 1 Ca(2+) ion per subunit.</text>
</comment>
<comment type="subcellular location">
    <subcellularLocation>
        <location evidence="2">Secreted</location>
    </subcellularLocation>
    <subcellularLocation>
        <location evidence="2">Lysosome</location>
    </subcellularLocation>
</comment>
<comment type="PTM">
    <text evidence="2">The conversion to 3-oxoalanine (also known as C-formylglycine, FGly), of a serine or cysteine residue in prokaryotes and of a cysteine residue in eukaryotes, is critical for catalytic activity.</text>
</comment>
<comment type="PTM">
    <text evidence="2">The 75-kDa precursor undergoes proteolytic processing to yield a 23 kDa form.</text>
</comment>
<comment type="PTM">
    <text evidence="2">N-glycosylated with both high mannose and complex type sugars.</text>
</comment>
<comment type="similarity">
    <text evidence="4">Belongs to the sulfatase family.</text>
</comment>